<comment type="function">
    <text evidence="1">Component of the general transcription and DNA repair factor IIH (TFIIH) core complex, which is involved in general and transcription-coupled nucleotide excision repair (NER) of damaged DNA and, when complexed to CAK, in RNA transcription by RNA polymerase II. In NER, TFIIH acts by opening DNA around the lesion to allow the excision of the damaged oligonucleotide and its replacement by a new DNA fragment. In transcription, TFIIH has an essential role in transcription initiation. When the pre-initiation complex (PIC) has been established, TFIIH is required for promoter opening and promoter escape. Phosphorylation of the C-terminal tail (CTD) of the largest subunit of RNA polymerase II by the kinase module CAK controls the initiation of transcription. Necessary for the stability of the TFIIH complex and for the presence of normal levels of TFIIH in the cell.</text>
</comment>
<comment type="subunit">
    <text evidence="1">Component of the 7-subunit TFIIH core complex composed of XPB/ERCC3, XPD/ERCC2, GTF2H1, GTF2H2, GTF2H3, GTF2H4 and GTF2H5, which is active in NER. The core complex associates with the 3-subunit CDK-activating kinase (CAK) module composed of CCNH/cyclin H, CDK7 and MNAT1 to form the 10-subunit holoenzyme (holo-TFIIH) active in transcription. Part of TBP-based Pol II pre-initiation complex (PIC), in which Pol II core assembles with general transcription factors and other specific initiation factors including GTF2E1, GTF2E2, GTF2F1, GTF2F2, TCEA1, ERCC2, ERCC3, GTF2H2, GTF2H3, GTF2H4, GTF2H5, GTF2A1, GTF2A2, GTF2B and TBP; this large multi-subunit PIC complex mediates DNA unwinding and targets Pol II core to the transcription start site where the first phosphodiester bond forms.</text>
</comment>
<comment type="subcellular location">
    <subcellularLocation>
        <location evidence="2">Nucleus</location>
    </subcellularLocation>
    <subcellularLocation>
        <location evidence="2">Cytoplasm</location>
    </subcellularLocation>
</comment>
<comment type="similarity">
    <text evidence="4">Belongs to the TFB5 family.</text>
</comment>
<keyword id="KW-0963">Cytoplasm</keyword>
<keyword id="KW-0227">DNA damage</keyword>
<keyword id="KW-0234">DNA repair</keyword>
<keyword id="KW-0945">Host-virus interaction</keyword>
<keyword id="KW-0539">Nucleus</keyword>
<keyword id="KW-0597">Phosphoprotein</keyword>
<keyword id="KW-1185">Reference proteome</keyword>
<keyword id="KW-0804">Transcription</keyword>
<keyword id="KW-0805">Transcription regulation</keyword>
<accession>Q8K2X8</accession>
<accession>Q8BT75</accession>
<dbReference type="EMBL" id="AK003547">
    <property type="protein sequence ID" value="BAC25038.1"/>
    <property type="molecule type" value="mRNA"/>
</dbReference>
<dbReference type="EMBL" id="AK003579">
    <property type="protein sequence ID" value="BAC25043.1"/>
    <property type="molecule type" value="mRNA"/>
</dbReference>
<dbReference type="EMBL" id="AK011281">
    <property type="protein sequence ID" value="BAC25328.1"/>
    <property type="molecule type" value="mRNA"/>
</dbReference>
<dbReference type="EMBL" id="AK012257">
    <property type="protein sequence ID" value="BAC25362.1"/>
    <property type="molecule type" value="mRNA"/>
</dbReference>
<dbReference type="EMBL" id="AK013225">
    <property type="protein sequence ID" value="BAC25398.1"/>
    <property type="molecule type" value="mRNA"/>
</dbReference>
<dbReference type="EMBL" id="BC029238">
    <property type="protein sequence ID" value="AAH29238.1"/>
    <property type="molecule type" value="mRNA"/>
</dbReference>
<dbReference type="CCDS" id="CCDS37423.1"/>
<dbReference type="RefSeq" id="NP_001344733.1">
    <property type="nucleotide sequence ID" value="NM_001357804.1"/>
</dbReference>
<dbReference type="RefSeq" id="NP_852057.2">
    <property type="nucleotide sequence ID" value="NM_181392.3"/>
</dbReference>
<dbReference type="RefSeq" id="XP_006523302.1">
    <property type="nucleotide sequence ID" value="XM_006523239.3"/>
</dbReference>
<dbReference type="RefSeq" id="XP_006523303.1">
    <property type="nucleotide sequence ID" value="XM_006523240.4"/>
</dbReference>
<dbReference type="SMR" id="Q8K2X8"/>
<dbReference type="BioGRID" id="211495">
    <property type="interactions" value="2"/>
</dbReference>
<dbReference type="FunCoup" id="Q8K2X8">
    <property type="interactions" value="801"/>
</dbReference>
<dbReference type="STRING" id="10090.ENSMUSP00000040355"/>
<dbReference type="iPTMnet" id="Q8K2X8"/>
<dbReference type="PhosphoSitePlus" id="Q8K2X8"/>
<dbReference type="PaxDb" id="10090-ENSMUSP00000040355"/>
<dbReference type="PeptideAtlas" id="Q8K2X8"/>
<dbReference type="ProteomicsDB" id="262879"/>
<dbReference type="Pumba" id="Q8K2X8"/>
<dbReference type="Antibodypedia" id="70683">
    <property type="antibodies" value="86 antibodies from 18 providers"/>
</dbReference>
<dbReference type="DNASU" id="66467"/>
<dbReference type="Ensembl" id="ENSMUST00000039487.10">
    <property type="protein sequence ID" value="ENSMUSP00000040355.4"/>
    <property type="gene ID" value="ENSMUSG00000034345.15"/>
</dbReference>
<dbReference type="Ensembl" id="ENSMUST00000100955.3">
    <property type="protein sequence ID" value="ENSMUSP00000098515.3"/>
    <property type="gene ID" value="ENSMUSG00000034345.15"/>
</dbReference>
<dbReference type="GeneID" id="66467"/>
<dbReference type="KEGG" id="mmu:66467"/>
<dbReference type="UCSC" id="uc008aga.2">
    <property type="organism name" value="mouse"/>
</dbReference>
<dbReference type="AGR" id="MGI:107227"/>
<dbReference type="CTD" id="404672"/>
<dbReference type="MGI" id="MGI:107227">
    <property type="gene designation" value="Gtf2h5"/>
</dbReference>
<dbReference type="VEuPathDB" id="HostDB:ENSMUSG00000034345"/>
<dbReference type="eggNOG" id="KOG3451">
    <property type="taxonomic scope" value="Eukaryota"/>
</dbReference>
<dbReference type="GeneTree" id="ENSGT00390000004028"/>
<dbReference type="HOGENOM" id="CLU_166246_4_0_1"/>
<dbReference type="InParanoid" id="Q8K2X8"/>
<dbReference type="OMA" id="VKCDPAM"/>
<dbReference type="OrthoDB" id="354at2759"/>
<dbReference type="PhylomeDB" id="Q8K2X8"/>
<dbReference type="TreeFam" id="TF319487"/>
<dbReference type="Reactome" id="R-MMU-112382">
    <property type="pathway name" value="Formation of RNA Pol II elongation complex"/>
</dbReference>
<dbReference type="Reactome" id="R-MMU-113418">
    <property type="pathway name" value="Formation of the Early Elongation Complex"/>
</dbReference>
<dbReference type="Reactome" id="R-MMU-5696395">
    <property type="pathway name" value="Formation of Incision Complex in GG-NER"/>
</dbReference>
<dbReference type="Reactome" id="R-MMU-5696400">
    <property type="pathway name" value="Dual Incision in GG-NER"/>
</dbReference>
<dbReference type="Reactome" id="R-MMU-674695">
    <property type="pathway name" value="RNA Polymerase II Pre-transcription Events"/>
</dbReference>
<dbReference type="Reactome" id="R-MMU-6781823">
    <property type="pathway name" value="Formation of TC-NER Pre-Incision Complex"/>
</dbReference>
<dbReference type="Reactome" id="R-MMU-6782135">
    <property type="pathway name" value="Dual incision in TC-NER"/>
</dbReference>
<dbReference type="Reactome" id="R-MMU-6782210">
    <property type="pathway name" value="Gap-filling DNA repair synthesis and ligation in TC-NER"/>
</dbReference>
<dbReference type="Reactome" id="R-MMU-6796648">
    <property type="pathway name" value="TP53 Regulates Transcription of DNA Repair Genes"/>
</dbReference>
<dbReference type="Reactome" id="R-MMU-72086">
    <property type="pathway name" value="mRNA Capping"/>
</dbReference>
<dbReference type="Reactome" id="R-MMU-73762">
    <property type="pathway name" value="RNA Polymerase I Transcription Initiation"/>
</dbReference>
<dbReference type="Reactome" id="R-MMU-73772">
    <property type="pathway name" value="RNA Polymerase I Promoter Escape"/>
</dbReference>
<dbReference type="Reactome" id="R-MMU-73776">
    <property type="pathway name" value="RNA Polymerase II Promoter Escape"/>
</dbReference>
<dbReference type="Reactome" id="R-MMU-73779">
    <property type="pathway name" value="RNA Polymerase II Transcription Pre-Initiation And Promoter Opening"/>
</dbReference>
<dbReference type="Reactome" id="R-MMU-73863">
    <property type="pathway name" value="RNA Polymerase I Transcription Termination"/>
</dbReference>
<dbReference type="Reactome" id="R-MMU-75953">
    <property type="pathway name" value="RNA Polymerase II Transcription Initiation"/>
</dbReference>
<dbReference type="Reactome" id="R-MMU-75955">
    <property type="pathway name" value="RNA Polymerase II Transcription Elongation"/>
</dbReference>
<dbReference type="Reactome" id="R-MMU-76042">
    <property type="pathway name" value="RNA Polymerase II Transcription Initiation And Promoter Clearance"/>
</dbReference>
<dbReference type="Reactome" id="R-MMU-77075">
    <property type="pathway name" value="RNA Pol II CTD phosphorylation and interaction with CE"/>
</dbReference>
<dbReference type="BioGRID-ORCS" id="66467">
    <property type="hits" value="5 hits in 109 CRISPR screens"/>
</dbReference>
<dbReference type="ChiTaRS" id="Gtf2h5">
    <property type="organism name" value="mouse"/>
</dbReference>
<dbReference type="PRO" id="PR:Q8K2X8"/>
<dbReference type="Proteomes" id="UP000000589">
    <property type="component" value="Chromosome 17"/>
</dbReference>
<dbReference type="RNAct" id="Q8K2X8">
    <property type="molecule type" value="protein"/>
</dbReference>
<dbReference type="Bgee" id="ENSMUSG00000034345">
    <property type="expression patterns" value="Expressed in manus and 256 other cell types or tissues"/>
</dbReference>
<dbReference type="GO" id="GO:0005737">
    <property type="term" value="C:cytoplasm"/>
    <property type="evidence" value="ECO:0007669"/>
    <property type="project" value="UniProtKB-SubCell"/>
</dbReference>
<dbReference type="GO" id="GO:0005730">
    <property type="term" value="C:nucleolus"/>
    <property type="evidence" value="ECO:0000266"/>
    <property type="project" value="MGI"/>
</dbReference>
<dbReference type="GO" id="GO:0005669">
    <property type="term" value="C:transcription factor TFIID complex"/>
    <property type="evidence" value="ECO:0007669"/>
    <property type="project" value="Ensembl"/>
</dbReference>
<dbReference type="GO" id="GO:0000439">
    <property type="term" value="C:transcription factor TFIIH core complex"/>
    <property type="evidence" value="ECO:0007669"/>
    <property type="project" value="InterPro"/>
</dbReference>
<dbReference type="GO" id="GO:0071480">
    <property type="term" value="P:cellular response to gamma radiation"/>
    <property type="evidence" value="ECO:0000315"/>
    <property type="project" value="MGI"/>
</dbReference>
<dbReference type="GO" id="GO:0000462">
    <property type="term" value="P:maturation of SSU-rRNA from tricistronic rRNA transcript (SSU-rRNA, 5.8S rRNA, LSU-rRNA)"/>
    <property type="evidence" value="ECO:0000315"/>
    <property type="project" value="MGI"/>
</dbReference>
<dbReference type="GO" id="GO:0006289">
    <property type="term" value="P:nucleotide-excision repair"/>
    <property type="evidence" value="ECO:0000315"/>
    <property type="project" value="MGI"/>
</dbReference>
<dbReference type="GO" id="GO:0006294">
    <property type="term" value="P:nucleotide-excision repair, preincision complex assembly"/>
    <property type="evidence" value="ECO:0000315"/>
    <property type="project" value="MGI"/>
</dbReference>
<dbReference type="GO" id="GO:0006362">
    <property type="term" value="P:transcription elongation by RNA polymerase I"/>
    <property type="evidence" value="ECO:0000315"/>
    <property type="project" value="MGI"/>
</dbReference>
<dbReference type="GO" id="GO:0006367">
    <property type="term" value="P:transcription initiation at RNA polymerase II promoter"/>
    <property type="evidence" value="ECO:0007669"/>
    <property type="project" value="InterPro"/>
</dbReference>
<dbReference type="FunFam" id="3.30.70.1220:FF:000001">
    <property type="entry name" value="General transcription factor IIH subunit 5"/>
    <property type="match status" value="1"/>
</dbReference>
<dbReference type="Gene3D" id="3.30.70.1220">
    <property type="entry name" value="TFB5-like"/>
    <property type="match status" value="1"/>
</dbReference>
<dbReference type="InterPro" id="IPR035935">
    <property type="entry name" value="TFB5-like_sf"/>
</dbReference>
<dbReference type="InterPro" id="IPR009400">
    <property type="entry name" value="TFIIH_TTDA/Tfb5"/>
</dbReference>
<dbReference type="PANTHER" id="PTHR28580">
    <property type="entry name" value="GENERAL TRANSCRIPTION FACTOR IIH SUBUNIT 5"/>
    <property type="match status" value="1"/>
</dbReference>
<dbReference type="PANTHER" id="PTHR28580:SF1">
    <property type="entry name" value="GENERAL TRANSCRIPTION FACTOR IIH SUBUNIT 5"/>
    <property type="match status" value="1"/>
</dbReference>
<dbReference type="Pfam" id="PF06331">
    <property type="entry name" value="Tfb5"/>
    <property type="match status" value="1"/>
</dbReference>
<dbReference type="SMART" id="SM01395">
    <property type="entry name" value="Tbf5"/>
    <property type="match status" value="1"/>
</dbReference>
<dbReference type="SUPFAM" id="SSF142897">
    <property type="entry name" value="TFB5-like"/>
    <property type="match status" value="1"/>
</dbReference>
<sequence>MVNVLKGVLIECDPAMKQFLLYLDEANALGKKFIIQDIDDTHVFVIAELVNVLQERVGELMDQNAFSLTQK</sequence>
<feature type="chain" id="PRO_0000119257" description="General transcription factor IIH subunit 5">
    <location>
        <begin position="1"/>
        <end position="71"/>
    </location>
</feature>
<feature type="modified residue" description="Phosphothreonine" evidence="6">
    <location>
        <position position="69"/>
    </location>
</feature>
<feature type="sequence conflict" description="In Ref. 1; BAC25398." evidence="4" ref="1">
    <original>G</original>
    <variation>R</variation>
    <location>
        <position position="7"/>
    </location>
</feature>
<organism>
    <name type="scientific">Mus musculus</name>
    <name type="common">Mouse</name>
    <dbReference type="NCBI Taxonomy" id="10090"/>
    <lineage>
        <taxon>Eukaryota</taxon>
        <taxon>Metazoa</taxon>
        <taxon>Chordata</taxon>
        <taxon>Craniata</taxon>
        <taxon>Vertebrata</taxon>
        <taxon>Euteleostomi</taxon>
        <taxon>Mammalia</taxon>
        <taxon>Eutheria</taxon>
        <taxon>Euarchontoglires</taxon>
        <taxon>Glires</taxon>
        <taxon>Rodentia</taxon>
        <taxon>Myomorpha</taxon>
        <taxon>Muroidea</taxon>
        <taxon>Muridae</taxon>
        <taxon>Murinae</taxon>
        <taxon>Mus</taxon>
        <taxon>Mus</taxon>
    </lineage>
</organism>
<protein>
    <recommendedName>
        <fullName>General transcription factor IIH subunit 5</fullName>
    </recommendedName>
    <alternativeName>
        <fullName>General transcription factor IIH polypeptide 5</fullName>
    </alternativeName>
    <alternativeName>
        <fullName evidence="1">TFB5 ortholog</fullName>
    </alternativeName>
    <alternativeName>
        <fullName evidence="1">TFIIH basal transcription factor complex TTD-A subunit</fullName>
    </alternativeName>
    <alternativeName>
        <fullName evidence="3">TFIIH subunit p8</fullName>
    </alternativeName>
</protein>
<name>TF2H5_MOUSE</name>
<evidence type="ECO:0000250" key="1">
    <source>
        <dbReference type="UniProtKB" id="Q6ZYL4"/>
    </source>
</evidence>
<evidence type="ECO:0000269" key="2">
    <source>
    </source>
</evidence>
<evidence type="ECO:0000303" key="3">
    <source>
    </source>
</evidence>
<evidence type="ECO:0000305" key="4"/>
<evidence type="ECO:0000312" key="5">
    <source>
        <dbReference type="MGI" id="MGI:107227"/>
    </source>
</evidence>
<evidence type="ECO:0007744" key="6">
    <source>
    </source>
</evidence>
<reference key="1">
    <citation type="journal article" date="2005" name="Science">
        <title>The transcriptional landscape of the mammalian genome.</title>
        <authorList>
            <person name="Carninci P."/>
            <person name="Kasukawa T."/>
            <person name="Katayama S."/>
            <person name="Gough J."/>
            <person name="Frith M.C."/>
            <person name="Maeda N."/>
            <person name="Oyama R."/>
            <person name="Ravasi T."/>
            <person name="Lenhard B."/>
            <person name="Wells C."/>
            <person name="Kodzius R."/>
            <person name="Shimokawa K."/>
            <person name="Bajic V.B."/>
            <person name="Brenner S.E."/>
            <person name="Batalov S."/>
            <person name="Forrest A.R."/>
            <person name="Zavolan M."/>
            <person name="Davis M.J."/>
            <person name="Wilming L.G."/>
            <person name="Aidinis V."/>
            <person name="Allen J.E."/>
            <person name="Ambesi-Impiombato A."/>
            <person name="Apweiler R."/>
            <person name="Aturaliya R.N."/>
            <person name="Bailey T.L."/>
            <person name="Bansal M."/>
            <person name="Baxter L."/>
            <person name="Beisel K.W."/>
            <person name="Bersano T."/>
            <person name="Bono H."/>
            <person name="Chalk A.M."/>
            <person name="Chiu K.P."/>
            <person name="Choudhary V."/>
            <person name="Christoffels A."/>
            <person name="Clutterbuck D.R."/>
            <person name="Crowe M.L."/>
            <person name="Dalla E."/>
            <person name="Dalrymple B.P."/>
            <person name="de Bono B."/>
            <person name="Della Gatta G."/>
            <person name="di Bernardo D."/>
            <person name="Down T."/>
            <person name="Engstrom P."/>
            <person name="Fagiolini M."/>
            <person name="Faulkner G."/>
            <person name="Fletcher C.F."/>
            <person name="Fukushima T."/>
            <person name="Furuno M."/>
            <person name="Futaki S."/>
            <person name="Gariboldi M."/>
            <person name="Georgii-Hemming P."/>
            <person name="Gingeras T.R."/>
            <person name="Gojobori T."/>
            <person name="Green R.E."/>
            <person name="Gustincich S."/>
            <person name="Harbers M."/>
            <person name="Hayashi Y."/>
            <person name="Hensch T.K."/>
            <person name="Hirokawa N."/>
            <person name="Hill D."/>
            <person name="Huminiecki L."/>
            <person name="Iacono M."/>
            <person name="Ikeo K."/>
            <person name="Iwama A."/>
            <person name="Ishikawa T."/>
            <person name="Jakt M."/>
            <person name="Kanapin A."/>
            <person name="Katoh M."/>
            <person name="Kawasawa Y."/>
            <person name="Kelso J."/>
            <person name="Kitamura H."/>
            <person name="Kitano H."/>
            <person name="Kollias G."/>
            <person name="Krishnan S.P."/>
            <person name="Kruger A."/>
            <person name="Kummerfeld S.K."/>
            <person name="Kurochkin I.V."/>
            <person name="Lareau L.F."/>
            <person name="Lazarevic D."/>
            <person name="Lipovich L."/>
            <person name="Liu J."/>
            <person name="Liuni S."/>
            <person name="McWilliam S."/>
            <person name="Madan Babu M."/>
            <person name="Madera M."/>
            <person name="Marchionni L."/>
            <person name="Matsuda H."/>
            <person name="Matsuzawa S."/>
            <person name="Miki H."/>
            <person name="Mignone F."/>
            <person name="Miyake S."/>
            <person name="Morris K."/>
            <person name="Mottagui-Tabar S."/>
            <person name="Mulder N."/>
            <person name="Nakano N."/>
            <person name="Nakauchi H."/>
            <person name="Ng P."/>
            <person name="Nilsson R."/>
            <person name="Nishiguchi S."/>
            <person name="Nishikawa S."/>
            <person name="Nori F."/>
            <person name="Ohara O."/>
            <person name="Okazaki Y."/>
            <person name="Orlando V."/>
            <person name="Pang K.C."/>
            <person name="Pavan W.J."/>
            <person name="Pavesi G."/>
            <person name="Pesole G."/>
            <person name="Petrovsky N."/>
            <person name="Piazza S."/>
            <person name="Reed J."/>
            <person name="Reid J.F."/>
            <person name="Ring B.Z."/>
            <person name="Ringwald M."/>
            <person name="Rost B."/>
            <person name="Ruan Y."/>
            <person name="Salzberg S.L."/>
            <person name="Sandelin A."/>
            <person name="Schneider C."/>
            <person name="Schoenbach C."/>
            <person name="Sekiguchi K."/>
            <person name="Semple C.A."/>
            <person name="Seno S."/>
            <person name="Sessa L."/>
            <person name="Sheng Y."/>
            <person name="Shibata Y."/>
            <person name="Shimada H."/>
            <person name="Shimada K."/>
            <person name="Silva D."/>
            <person name="Sinclair B."/>
            <person name="Sperling S."/>
            <person name="Stupka E."/>
            <person name="Sugiura K."/>
            <person name="Sultana R."/>
            <person name="Takenaka Y."/>
            <person name="Taki K."/>
            <person name="Tammoja K."/>
            <person name="Tan S.L."/>
            <person name="Tang S."/>
            <person name="Taylor M.S."/>
            <person name="Tegner J."/>
            <person name="Teichmann S.A."/>
            <person name="Ueda H.R."/>
            <person name="van Nimwegen E."/>
            <person name="Verardo R."/>
            <person name="Wei C.L."/>
            <person name="Yagi K."/>
            <person name="Yamanishi H."/>
            <person name="Zabarovsky E."/>
            <person name="Zhu S."/>
            <person name="Zimmer A."/>
            <person name="Hide W."/>
            <person name="Bult C."/>
            <person name="Grimmond S.M."/>
            <person name="Teasdale R.D."/>
            <person name="Liu E.T."/>
            <person name="Brusic V."/>
            <person name="Quackenbush J."/>
            <person name="Wahlestedt C."/>
            <person name="Mattick J.S."/>
            <person name="Hume D.A."/>
            <person name="Kai C."/>
            <person name="Sasaki D."/>
            <person name="Tomaru Y."/>
            <person name="Fukuda S."/>
            <person name="Kanamori-Katayama M."/>
            <person name="Suzuki M."/>
            <person name="Aoki J."/>
            <person name="Arakawa T."/>
            <person name="Iida J."/>
            <person name="Imamura K."/>
            <person name="Itoh M."/>
            <person name="Kato T."/>
            <person name="Kawaji H."/>
            <person name="Kawagashira N."/>
            <person name="Kawashima T."/>
            <person name="Kojima M."/>
            <person name="Kondo S."/>
            <person name="Konno H."/>
            <person name="Nakano K."/>
            <person name="Ninomiya N."/>
            <person name="Nishio T."/>
            <person name="Okada M."/>
            <person name="Plessy C."/>
            <person name="Shibata K."/>
            <person name="Shiraki T."/>
            <person name="Suzuki S."/>
            <person name="Tagami M."/>
            <person name="Waki K."/>
            <person name="Watahiki A."/>
            <person name="Okamura-Oho Y."/>
            <person name="Suzuki H."/>
            <person name="Kawai J."/>
            <person name="Hayashizaki Y."/>
        </authorList>
    </citation>
    <scope>NUCLEOTIDE SEQUENCE [LARGE SCALE MRNA]</scope>
    <source>
        <strain>C57BL/6J</strain>
        <tissue>Embryo</tissue>
    </source>
</reference>
<reference key="2">
    <citation type="journal article" date="2004" name="Genome Res.">
        <title>The status, quality, and expansion of the NIH full-length cDNA project: the Mammalian Gene Collection (MGC).</title>
        <authorList>
            <consortium name="The MGC Project Team"/>
        </authorList>
    </citation>
    <scope>NUCLEOTIDE SEQUENCE [LARGE SCALE MRNA]</scope>
    <source>
        <strain>FVB/N</strain>
        <tissue>Mammary tumor</tissue>
    </source>
</reference>
<reference key="3">
    <citation type="journal article" date="2007" name="Science">
        <title>ATM and ATR substrate analysis reveals extensive protein networks responsive to DNA damage.</title>
        <authorList>
            <person name="Matsuoka S."/>
            <person name="Ballif B.A."/>
            <person name="Smogorzewska A."/>
            <person name="McDonald E.R. III"/>
            <person name="Hurov K.E."/>
            <person name="Luo J."/>
            <person name="Bakalarski C.E."/>
            <person name="Zhao Z."/>
            <person name="Solimini N."/>
            <person name="Lerenthal Y."/>
            <person name="Shiloh Y."/>
            <person name="Gygi S.P."/>
            <person name="Elledge S.J."/>
        </authorList>
    </citation>
    <scope>PHOSPHORYLATION [LARGE SCALE ANALYSIS] AT THR-69</scope>
    <scope>IDENTIFICATION BY MASS SPECTROMETRY [LARGE SCALE ANALYSIS]</scope>
    <source>
        <tissue>Embryonic fibroblast</tissue>
    </source>
</reference>
<reference key="4">
    <citation type="journal article" date="2017" name="Vet. Microbiol.">
        <title>The matrix protein of vesicular stomatitis virus inhibits host-directed transcription of target genes via interaction with the TFIIH subunit p8.</title>
        <authorList>
            <person name="Pan W."/>
            <person name="Song D."/>
            <person name="He W."/>
            <person name="Lu H."/>
            <person name="Lan Y."/>
            <person name="Tong J."/>
            <person name="Gao F."/>
            <person name="Zhao K."/>
        </authorList>
    </citation>
    <scope>INTERACTION WITH VSIV PROTEIN M (MICROBIAL INFECTION)</scope>
    <scope>SUBCELLULAR LOCATION</scope>
</reference>
<gene>
    <name evidence="5" type="primary">Gtf2h5</name>
    <name type="synonym">D17Wsu155e</name>
</gene>
<proteinExistence type="evidence at protein level"/>